<protein>
    <recommendedName>
        <fullName>Probable cytochrome P450 6d4</fullName>
        <ecNumber>1.14.-.-</ecNumber>
    </recommendedName>
    <alternativeName>
        <fullName>CYPVID4</fullName>
    </alternativeName>
</protein>
<gene>
    <name type="primary">Cyp6d4</name>
    <name type="ORF">CG12800</name>
</gene>
<evidence type="ECO:0000250" key="1"/>
<evidence type="ECO:0000305" key="2"/>
<sequence length="515" mass="59182">MFSLILLAVTLLTLAWFYLKRHYEYWERRGFPFEKHSGIPFGCLDSVWRQEKSMGLAIYDVYVKSKERVLGIYLLFRPAVLIRDADLARRVLAQDFASFHDRGVYVDEERDPLSANIFSLRGQSWRSMRHMLSPCFTSGKLKSMFSTSEDIGDKMVAHLQKELPEEGFKEVDIKKVMQNYAIDIIASTIFGLDVNSFENPDNKFRKLVSLARANNRFNAMFGMMIFLVPSIAQFLFRIGFKNPVGLAMLQIVKETVEYREKHGIVRKDLLQLLIQLRNTGKIDENDEKSFSIQKTPDGHIKTISLEAITAQAFIFYIAGQETTGSTAAFTIYELAQYPELLKRLQDEVDETLAKNDGKITYDSLNKMEFLDLCVQETIRKYPGLPILNRECTQDYTVPDTNHVIPKGTPVVISLYGIHHDAEYFPDPETYDPERFSEESRNYNPTAFMPFGEGPRICIAQRMGRINSKLAIIKILQNFNVEVMSRSEIEFENSGIALIPKHGVRVRLSKRVPKLS</sequence>
<reference key="1">
    <citation type="journal article" date="2000" name="Science">
        <title>The genome sequence of Drosophila melanogaster.</title>
        <authorList>
            <person name="Adams M.D."/>
            <person name="Celniker S.E."/>
            <person name="Holt R.A."/>
            <person name="Evans C.A."/>
            <person name="Gocayne J.D."/>
            <person name="Amanatides P.G."/>
            <person name="Scherer S.E."/>
            <person name="Li P.W."/>
            <person name="Hoskins R.A."/>
            <person name="Galle R.F."/>
            <person name="George R.A."/>
            <person name="Lewis S.E."/>
            <person name="Richards S."/>
            <person name="Ashburner M."/>
            <person name="Henderson S.N."/>
            <person name="Sutton G.G."/>
            <person name="Wortman J.R."/>
            <person name="Yandell M.D."/>
            <person name="Zhang Q."/>
            <person name="Chen L.X."/>
            <person name="Brandon R.C."/>
            <person name="Rogers Y.-H.C."/>
            <person name="Blazej R.G."/>
            <person name="Champe M."/>
            <person name="Pfeiffer B.D."/>
            <person name="Wan K.H."/>
            <person name="Doyle C."/>
            <person name="Baxter E.G."/>
            <person name="Helt G."/>
            <person name="Nelson C.R."/>
            <person name="Miklos G.L.G."/>
            <person name="Abril J.F."/>
            <person name="Agbayani A."/>
            <person name="An H.-J."/>
            <person name="Andrews-Pfannkoch C."/>
            <person name="Baldwin D."/>
            <person name="Ballew R.M."/>
            <person name="Basu A."/>
            <person name="Baxendale J."/>
            <person name="Bayraktaroglu L."/>
            <person name="Beasley E.M."/>
            <person name="Beeson K.Y."/>
            <person name="Benos P.V."/>
            <person name="Berman B.P."/>
            <person name="Bhandari D."/>
            <person name="Bolshakov S."/>
            <person name="Borkova D."/>
            <person name="Botchan M.R."/>
            <person name="Bouck J."/>
            <person name="Brokstein P."/>
            <person name="Brottier P."/>
            <person name="Burtis K.C."/>
            <person name="Busam D.A."/>
            <person name="Butler H."/>
            <person name="Cadieu E."/>
            <person name="Center A."/>
            <person name="Chandra I."/>
            <person name="Cherry J.M."/>
            <person name="Cawley S."/>
            <person name="Dahlke C."/>
            <person name="Davenport L.B."/>
            <person name="Davies P."/>
            <person name="de Pablos B."/>
            <person name="Delcher A."/>
            <person name="Deng Z."/>
            <person name="Mays A.D."/>
            <person name="Dew I."/>
            <person name="Dietz S.M."/>
            <person name="Dodson K."/>
            <person name="Doup L.E."/>
            <person name="Downes M."/>
            <person name="Dugan-Rocha S."/>
            <person name="Dunkov B.C."/>
            <person name="Dunn P."/>
            <person name="Durbin K.J."/>
            <person name="Evangelista C.C."/>
            <person name="Ferraz C."/>
            <person name="Ferriera S."/>
            <person name="Fleischmann W."/>
            <person name="Fosler C."/>
            <person name="Gabrielian A.E."/>
            <person name="Garg N.S."/>
            <person name="Gelbart W.M."/>
            <person name="Glasser K."/>
            <person name="Glodek A."/>
            <person name="Gong F."/>
            <person name="Gorrell J.H."/>
            <person name="Gu Z."/>
            <person name="Guan P."/>
            <person name="Harris M."/>
            <person name="Harris N.L."/>
            <person name="Harvey D.A."/>
            <person name="Heiman T.J."/>
            <person name="Hernandez J.R."/>
            <person name="Houck J."/>
            <person name="Hostin D."/>
            <person name="Houston K.A."/>
            <person name="Howland T.J."/>
            <person name="Wei M.-H."/>
            <person name="Ibegwam C."/>
            <person name="Jalali M."/>
            <person name="Kalush F."/>
            <person name="Karpen G.H."/>
            <person name="Ke Z."/>
            <person name="Kennison J.A."/>
            <person name="Ketchum K.A."/>
            <person name="Kimmel B.E."/>
            <person name="Kodira C.D."/>
            <person name="Kraft C.L."/>
            <person name="Kravitz S."/>
            <person name="Kulp D."/>
            <person name="Lai Z."/>
            <person name="Lasko P."/>
            <person name="Lei Y."/>
            <person name="Levitsky A.A."/>
            <person name="Li J.H."/>
            <person name="Li Z."/>
            <person name="Liang Y."/>
            <person name="Lin X."/>
            <person name="Liu X."/>
            <person name="Mattei B."/>
            <person name="McIntosh T.C."/>
            <person name="McLeod M.P."/>
            <person name="McPherson D."/>
            <person name="Merkulov G."/>
            <person name="Milshina N.V."/>
            <person name="Mobarry C."/>
            <person name="Morris J."/>
            <person name="Moshrefi A."/>
            <person name="Mount S.M."/>
            <person name="Moy M."/>
            <person name="Murphy B."/>
            <person name="Murphy L."/>
            <person name="Muzny D.M."/>
            <person name="Nelson D.L."/>
            <person name="Nelson D.R."/>
            <person name="Nelson K.A."/>
            <person name="Nixon K."/>
            <person name="Nusskern D.R."/>
            <person name="Pacleb J.M."/>
            <person name="Palazzolo M."/>
            <person name="Pittman G.S."/>
            <person name="Pan S."/>
            <person name="Pollard J."/>
            <person name="Puri V."/>
            <person name="Reese M.G."/>
            <person name="Reinert K."/>
            <person name="Remington K."/>
            <person name="Saunders R.D.C."/>
            <person name="Scheeler F."/>
            <person name="Shen H."/>
            <person name="Shue B.C."/>
            <person name="Siden-Kiamos I."/>
            <person name="Simpson M."/>
            <person name="Skupski M.P."/>
            <person name="Smith T.J."/>
            <person name="Spier E."/>
            <person name="Spradling A.C."/>
            <person name="Stapleton M."/>
            <person name="Strong R."/>
            <person name="Sun E."/>
            <person name="Svirskas R."/>
            <person name="Tector C."/>
            <person name="Turner R."/>
            <person name="Venter E."/>
            <person name="Wang A.H."/>
            <person name="Wang X."/>
            <person name="Wang Z.-Y."/>
            <person name="Wassarman D.A."/>
            <person name="Weinstock G.M."/>
            <person name="Weissenbach J."/>
            <person name="Williams S.M."/>
            <person name="Woodage T."/>
            <person name="Worley K.C."/>
            <person name="Wu D."/>
            <person name="Yang S."/>
            <person name="Yao Q.A."/>
            <person name="Ye J."/>
            <person name="Yeh R.-F."/>
            <person name="Zaveri J.S."/>
            <person name="Zhan M."/>
            <person name="Zhang G."/>
            <person name="Zhao Q."/>
            <person name="Zheng L."/>
            <person name="Zheng X.H."/>
            <person name="Zhong F.N."/>
            <person name="Zhong W."/>
            <person name="Zhou X."/>
            <person name="Zhu S.C."/>
            <person name="Zhu X."/>
            <person name="Smith H.O."/>
            <person name="Gibbs R.A."/>
            <person name="Myers E.W."/>
            <person name="Rubin G.M."/>
            <person name="Venter J.C."/>
        </authorList>
    </citation>
    <scope>NUCLEOTIDE SEQUENCE [LARGE SCALE GENOMIC DNA]</scope>
    <source>
        <strain>Berkeley</strain>
    </source>
</reference>
<reference key="2">
    <citation type="journal article" date="2002" name="Genome Biol.">
        <title>Annotation of the Drosophila melanogaster euchromatic genome: a systematic review.</title>
        <authorList>
            <person name="Misra S."/>
            <person name="Crosby M.A."/>
            <person name="Mungall C.J."/>
            <person name="Matthews B.B."/>
            <person name="Campbell K.S."/>
            <person name="Hradecky P."/>
            <person name="Huang Y."/>
            <person name="Kaminker J.S."/>
            <person name="Millburn G.H."/>
            <person name="Prochnik S.E."/>
            <person name="Smith C.D."/>
            <person name="Tupy J.L."/>
            <person name="Whitfield E.J."/>
            <person name="Bayraktaroglu L."/>
            <person name="Berman B.P."/>
            <person name="Bettencourt B.R."/>
            <person name="Celniker S.E."/>
            <person name="de Grey A.D.N.J."/>
            <person name="Drysdale R.A."/>
            <person name="Harris N.L."/>
            <person name="Richter J."/>
            <person name="Russo S."/>
            <person name="Schroeder A.J."/>
            <person name="Shu S.Q."/>
            <person name="Stapleton M."/>
            <person name="Yamada C."/>
            <person name="Ashburner M."/>
            <person name="Gelbart W.M."/>
            <person name="Rubin G.M."/>
            <person name="Lewis S.E."/>
        </authorList>
    </citation>
    <scope>GENOME REANNOTATION</scope>
    <source>
        <strain>Berkeley</strain>
    </source>
</reference>
<reference key="3">
    <citation type="journal article" date="2002" name="Genome Biol.">
        <title>A Drosophila full-length cDNA resource.</title>
        <authorList>
            <person name="Stapleton M."/>
            <person name="Carlson J.W."/>
            <person name="Brokstein P."/>
            <person name="Yu C."/>
            <person name="Champe M."/>
            <person name="George R.A."/>
            <person name="Guarin H."/>
            <person name="Kronmiller B."/>
            <person name="Pacleb J.M."/>
            <person name="Park S."/>
            <person name="Wan K.H."/>
            <person name="Rubin G.M."/>
            <person name="Celniker S.E."/>
        </authorList>
    </citation>
    <scope>NUCLEOTIDE SEQUENCE [LARGE SCALE MRNA]</scope>
    <source>
        <strain>Berkeley</strain>
        <tissue>Head</tissue>
    </source>
</reference>
<feature type="chain" id="PRO_0000051881" description="Probable cytochrome P450 6d4">
    <location>
        <begin position="1"/>
        <end position="515"/>
    </location>
</feature>
<feature type="binding site" description="axial binding residue" evidence="1">
    <location>
        <position position="457"/>
    </location>
    <ligand>
        <name>heme</name>
        <dbReference type="ChEBI" id="CHEBI:30413"/>
    </ligand>
    <ligandPart>
        <name>Fe</name>
        <dbReference type="ChEBI" id="CHEBI:18248"/>
    </ligandPart>
</feature>
<keyword id="KW-0256">Endoplasmic reticulum</keyword>
<keyword id="KW-0349">Heme</keyword>
<keyword id="KW-0408">Iron</keyword>
<keyword id="KW-0472">Membrane</keyword>
<keyword id="KW-0479">Metal-binding</keyword>
<keyword id="KW-0492">Microsome</keyword>
<keyword id="KW-0503">Monooxygenase</keyword>
<keyword id="KW-0560">Oxidoreductase</keyword>
<keyword id="KW-1185">Reference proteome</keyword>
<accession>Q9VCW1</accession>
<dbReference type="EC" id="1.14.-.-"/>
<dbReference type="EMBL" id="AE014297">
    <property type="protein sequence ID" value="AAF56044.1"/>
    <property type="molecule type" value="Genomic_DNA"/>
</dbReference>
<dbReference type="EMBL" id="AY051606">
    <property type="protein sequence ID" value="AAK93030.1"/>
    <property type="molecule type" value="mRNA"/>
</dbReference>
<dbReference type="RefSeq" id="NP_651082.1">
    <property type="nucleotide sequence ID" value="NM_142825.4"/>
</dbReference>
<dbReference type="SMR" id="Q9VCW1"/>
<dbReference type="BioGRID" id="67632">
    <property type="interactions" value="8"/>
</dbReference>
<dbReference type="FunCoup" id="Q9VCW1">
    <property type="interactions" value="58"/>
</dbReference>
<dbReference type="IntAct" id="Q9VCW1">
    <property type="interactions" value="4"/>
</dbReference>
<dbReference type="STRING" id="7227.FBpp0083697"/>
<dbReference type="PaxDb" id="7227-FBpp0083697"/>
<dbReference type="DNASU" id="42682"/>
<dbReference type="EnsemblMetazoa" id="FBtr0084304">
    <property type="protein sequence ID" value="FBpp0083697"/>
    <property type="gene ID" value="FBgn0039006"/>
</dbReference>
<dbReference type="GeneID" id="42682"/>
<dbReference type="KEGG" id="dme:Dmel_CG12800"/>
<dbReference type="UCSC" id="CG12800-RA">
    <property type="organism name" value="d. melanogaster"/>
</dbReference>
<dbReference type="AGR" id="FB:FBgn0039006"/>
<dbReference type="CTD" id="42682"/>
<dbReference type="FlyBase" id="FBgn0039006">
    <property type="gene designation" value="Cyp6d4"/>
</dbReference>
<dbReference type="VEuPathDB" id="VectorBase:FBgn0039006"/>
<dbReference type="eggNOG" id="KOG0158">
    <property type="taxonomic scope" value="Eukaryota"/>
</dbReference>
<dbReference type="GeneTree" id="ENSGT00940000168877"/>
<dbReference type="HOGENOM" id="CLU_001570_5_2_1"/>
<dbReference type="InParanoid" id="Q9VCW1"/>
<dbReference type="OMA" id="VMQTYAI"/>
<dbReference type="OrthoDB" id="2789670at2759"/>
<dbReference type="PhylomeDB" id="Q9VCW1"/>
<dbReference type="BioGRID-ORCS" id="42682">
    <property type="hits" value="0 hits in 3 CRISPR screens"/>
</dbReference>
<dbReference type="GenomeRNAi" id="42682"/>
<dbReference type="PRO" id="PR:Q9VCW1"/>
<dbReference type="Proteomes" id="UP000000803">
    <property type="component" value="Chromosome 3R"/>
</dbReference>
<dbReference type="Bgee" id="FBgn0039006">
    <property type="expression patterns" value="Expressed in midgut and 56 other cell types or tissues"/>
</dbReference>
<dbReference type="GO" id="GO:0005789">
    <property type="term" value="C:endoplasmic reticulum membrane"/>
    <property type="evidence" value="ECO:0007669"/>
    <property type="project" value="UniProtKB-SubCell"/>
</dbReference>
<dbReference type="GO" id="GO:0020037">
    <property type="term" value="F:heme binding"/>
    <property type="evidence" value="ECO:0007669"/>
    <property type="project" value="InterPro"/>
</dbReference>
<dbReference type="GO" id="GO:0005506">
    <property type="term" value="F:iron ion binding"/>
    <property type="evidence" value="ECO:0007669"/>
    <property type="project" value="InterPro"/>
</dbReference>
<dbReference type="GO" id="GO:0004497">
    <property type="term" value="F:monooxygenase activity"/>
    <property type="evidence" value="ECO:0007669"/>
    <property type="project" value="UniProtKB-KW"/>
</dbReference>
<dbReference type="GO" id="GO:0016705">
    <property type="term" value="F:oxidoreductase activity, acting on paired donors, with incorporation or reduction of molecular oxygen"/>
    <property type="evidence" value="ECO:0007669"/>
    <property type="project" value="InterPro"/>
</dbReference>
<dbReference type="CDD" id="cd11056">
    <property type="entry name" value="CYP6-like"/>
    <property type="match status" value="1"/>
</dbReference>
<dbReference type="FunFam" id="1.10.630.10:FF:000042">
    <property type="entry name" value="Cytochrome P450"/>
    <property type="match status" value="1"/>
</dbReference>
<dbReference type="Gene3D" id="1.10.630.10">
    <property type="entry name" value="Cytochrome P450"/>
    <property type="match status" value="1"/>
</dbReference>
<dbReference type="InterPro" id="IPR001128">
    <property type="entry name" value="Cyt_P450"/>
</dbReference>
<dbReference type="InterPro" id="IPR017972">
    <property type="entry name" value="Cyt_P450_CS"/>
</dbReference>
<dbReference type="InterPro" id="IPR002401">
    <property type="entry name" value="Cyt_P450_E_grp-I"/>
</dbReference>
<dbReference type="InterPro" id="IPR036396">
    <property type="entry name" value="Cyt_P450_sf"/>
</dbReference>
<dbReference type="InterPro" id="IPR050476">
    <property type="entry name" value="Insect_CytP450_Detox"/>
</dbReference>
<dbReference type="PANTHER" id="PTHR24292">
    <property type="entry name" value="CYTOCHROME P450"/>
    <property type="match status" value="1"/>
</dbReference>
<dbReference type="PANTHER" id="PTHR24292:SF93">
    <property type="entry name" value="CYTOCHROME P450 310A1-RELATED"/>
    <property type="match status" value="1"/>
</dbReference>
<dbReference type="Pfam" id="PF00067">
    <property type="entry name" value="p450"/>
    <property type="match status" value="1"/>
</dbReference>
<dbReference type="PRINTS" id="PR00463">
    <property type="entry name" value="EP450I"/>
</dbReference>
<dbReference type="PRINTS" id="PR00385">
    <property type="entry name" value="P450"/>
</dbReference>
<dbReference type="SUPFAM" id="SSF48264">
    <property type="entry name" value="Cytochrome P450"/>
    <property type="match status" value="1"/>
</dbReference>
<dbReference type="PROSITE" id="PS00086">
    <property type="entry name" value="CYTOCHROME_P450"/>
    <property type="match status" value="1"/>
</dbReference>
<proteinExistence type="evidence at transcript level"/>
<comment type="function">
    <text evidence="1">May be involved in the metabolism of insect hormones and in the breakdown of synthetic insecticides.</text>
</comment>
<comment type="cofactor">
    <cofactor evidence="1">
        <name>heme</name>
        <dbReference type="ChEBI" id="CHEBI:30413"/>
    </cofactor>
</comment>
<comment type="subcellular location">
    <subcellularLocation>
        <location evidence="2">Endoplasmic reticulum membrane</location>
        <topology evidence="2">Peripheral membrane protein</topology>
    </subcellularLocation>
    <subcellularLocation>
        <location evidence="2">Microsome membrane</location>
        <topology evidence="2">Peripheral membrane protein</topology>
    </subcellularLocation>
</comment>
<comment type="similarity">
    <text evidence="2">Belongs to the cytochrome P450 family.</text>
</comment>
<organism>
    <name type="scientific">Drosophila melanogaster</name>
    <name type="common">Fruit fly</name>
    <dbReference type="NCBI Taxonomy" id="7227"/>
    <lineage>
        <taxon>Eukaryota</taxon>
        <taxon>Metazoa</taxon>
        <taxon>Ecdysozoa</taxon>
        <taxon>Arthropoda</taxon>
        <taxon>Hexapoda</taxon>
        <taxon>Insecta</taxon>
        <taxon>Pterygota</taxon>
        <taxon>Neoptera</taxon>
        <taxon>Endopterygota</taxon>
        <taxon>Diptera</taxon>
        <taxon>Brachycera</taxon>
        <taxon>Muscomorpha</taxon>
        <taxon>Ephydroidea</taxon>
        <taxon>Drosophilidae</taxon>
        <taxon>Drosophila</taxon>
        <taxon>Sophophora</taxon>
    </lineage>
</organism>
<name>CP6D4_DROME</name>